<reference key="1">
    <citation type="journal article" date="2004" name="Biochem. J.">
        <title>A receptor-like kinase from Arabidopsis thaliana is a calmodulin-binding protein.</title>
        <authorList>
            <person name="Charpenteau M."/>
            <person name="Jaworski K."/>
            <person name="Ramirez B.C."/>
            <person name="Tretyn A."/>
            <person name="Ranjeva R."/>
            <person name="Ranty B."/>
        </authorList>
    </citation>
    <scope>NUCLEOTIDE SEQUENCE [MRNA] (ISOFORM 1)</scope>
    <scope>FUNCTION</scope>
    <scope>MUTAGENESIS OF LYS-423</scope>
    <scope>COFACTOR</scope>
    <scope>INTERACTION WITH CAM1</scope>
    <scope>AUTOPHOSPHORYLATION</scope>
    <scope>CATALYTIC ACTIVITY</scope>
    <scope>TISSUE SPECIFICITY</scope>
    <source>
        <strain>cv. Columbia</strain>
        <strain>cv. Landsberg erecta</strain>
    </source>
</reference>
<reference key="2">
    <citation type="journal article" date="2010" name="BMC Genomics">
        <title>Genome-wide cloning and sequence analysis of leucine-rich repeat receptor-like protein kinase genes in Arabidopsis thaliana.</title>
        <authorList>
            <person name="Gou X."/>
            <person name="He K."/>
            <person name="Yang H."/>
            <person name="Yuan T."/>
            <person name="Lin H."/>
            <person name="Clouse S.D."/>
            <person name="Li J."/>
        </authorList>
    </citation>
    <scope>NUCLEOTIDE SEQUENCE [MRNA] (ISOFORM 1)</scope>
    <scope>GENE FAMILY</scope>
    <source>
        <strain>cv. Columbia</strain>
    </source>
</reference>
<reference key="3">
    <citation type="journal article" date="1998" name="DNA Res.">
        <title>Structural analysis of Arabidopsis thaliana chromosome 5. VI. Sequence features of the regions of 1,367,185 bp covered by 19 physically assigned P1 and TAC clones.</title>
        <authorList>
            <person name="Kotani H."/>
            <person name="Nakamura Y."/>
            <person name="Sato S."/>
            <person name="Asamizu E."/>
            <person name="Kaneko T."/>
            <person name="Miyajima N."/>
            <person name="Tabata S."/>
        </authorList>
    </citation>
    <scope>NUCLEOTIDE SEQUENCE [LARGE SCALE GENOMIC DNA]</scope>
    <source>
        <strain>cv. Columbia</strain>
    </source>
</reference>
<reference key="4">
    <citation type="journal article" date="2017" name="Plant J.">
        <title>Araport11: a complete reannotation of the Arabidopsis thaliana reference genome.</title>
        <authorList>
            <person name="Cheng C.Y."/>
            <person name="Krishnakumar V."/>
            <person name="Chan A.P."/>
            <person name="Thibaud-Nissen F."/>
            <person name="Schobel S."/>
            <person name="Town C.D."/>
        </authorList>
    </citation>
    <scope>GENOME REANNOTATION</scope>
    <source>
        <strain>cv. Columbia</strain>
    </source>
</reference>
<reference key="5">
    <citation type="journal article" date="2003" name="Science">
        <title>Empirical analysis of transcriptional activity in the Arabidopsis genome.</title>
        <authorList>
            <person name="Yamada K."/>
            <person name="Lim J."/>
            <person name="Dale J.M."/>
            <person name="Chen H."/>
            <person name="Shinn P."/>
            <person name="Palm C.J."/>
            <person name="Southwick A.M."/>
            <person name="Wu H.C."/>
            <person name="Kim C.J."/>
            <person name="Nguyen M."/>
            <person name="Pham P.K."/>
            <person name="Cheuk R.F."/>
            <person name="Karlin-Newmann G."/>
            <person name="Liu S.X."/>
            <person name="Lam B."/>
            <person name="Sakano H."/>
            <person name="Wu T."/>
            <person name="Yu G."/>
            <person name="Miranda M."/>
            <person name="Quach H.L."/>
            <person name="Tripp M."/>
            <person name="Chang C.H."/>
            <person name="Lee J.M."/>
            <person name="Toriumi M.J."/>
            <person name="Chan M.M."/>
            <person name="Tang C.C."/>
            <person name="Onodera C.S."/>
            <person name="Deng J.M."/>
            <person name="Akiyama K."/>
            <person name="Ansari Y."/>
            <person name="Arakawa T."/>
            <person name="Banh J."/>
            <person name="Banno F."/>
            <person name="Bowser L."/>
            <person name="Brooks S.Y."/>
            <person name="Carninci P."/>
            <person name="Chao Q."/>
            <person name="Choy N."/>
            <person name="Enju A."/>
            <person name="Goldsmith A.D."/>
            <person name="Gurjal M."/>
            <person name="Hansen N.F."/>
            <person name="Hayashizaki Y."/>
            <person name="Johnson-Hopson C."/>
            <person name="Hsuan V.W."/>
            <person name="Iida K."/>
            <person name="Karnes M."/>
            <person name="Khan S."/>
            <person name="Koesema E."/>
            <person name="Ishida J."/>
            <person name="Jiang P.X."/>
            <person name="Jones T."/>
            <person name="Kawai J."/>
            <person name="Kamiya A."/>
            <person name="Meyers C."/>
            <person name="Nakajima M."/>
            <person name="Narusaka M."/>
            <person name="Seki M."/>
            <person name="Sakurai T."/>
            <person name="Satou M."/>
            <person name="Tamse R."/>
            <person name="Vaysberg M."/>
            <person name="Wallender E.K."/>
            <person name="Wong C."/>
            <person name="Yamamura Y."/>
            <person name="Yuan S."/>
            <person name="Shinozaki K."/>
            <person name="Davis R.W."/>
            <person name="Theologis A."/>
            <person name="Ecker J.R."/>
        </authorList>
    </citation>
    <scope>NUCLEOTIDE SEQUENCE [LARGE SCALE MRNA] (ISOFORM 1)</scope>
    <source>
        <strain>cv. Columbia</strain>
    </source>
</reference>
<reference key="6">
    <citation type="submission" date="2005-03" db="EMBL/GenBank/DDBJ databases">
        <title>Large-scale analysis of RIKEN Arabidopsis full-length (RAFL) cDNAs.</title>
        <authorList>
            <person name="Totoki Y."/>
            <person name="Seki M."/>
            <person name="Ishida J."/>
            <person name="Nakajima M."/>
            <person name="Enju A."/>
            <person name="Kamiya A."/>
            <person name="Narusaka M."/>
            <person name="Shin-i T."/>
            <person name="Nakagawa M."/>
            <person name="Sakamoto N."/>
            <person name="Oishi K."/>
            <person name="Kohara Y."/>
            <person name="Kobayashi M."/>
            <person name="Toyoda A."/>
            <person name="Sakaki Y."/>
            <person name="Sakurai T."/>
            <person name="Iida K."/>
            <person name="Akiyama K."/>
            <person name="Satou M."/>
            <person name="Toyoda T."/>
            <person name="Konagaya A."/>
            <person name="Carninci P."/>
            <person name="Kawai J."/>
            <person name="Hayashizaki Y."/>
            <person name="Shinozaki K."/>
        </authorList>
    </citation>
    <scope>NUCLEOTIDE SEQUENCE [LARGE SCALE MRNA] OF 578-666 (ISOFORM 1)</scope>
    <source>
        <strain>cv. Columbia</strain>
    </source>
</reference>
<reference key="7">
    <citation type="journal article" date="2004" name="J. Biol. Chem.">
        <title>Calcium/calmodulin up-regulates a cytoplasmic receptor-like kinase in plants.</title>
        <authorList>
            <person name="Yang T."/>
            <person name="Chaudhuri S."/>
            <person name="Yang L."/>
            <person name="Chen Y."/>
            <person name="Poovaiah B.W."/>
        </authorList>
    </citation>
    <scope>ACTIVITY REGULATION</scope>
</reference>
<reference key="8">
    <citation type="journal article" date="2005" name="Development">
        <title>Genetic and molecular identification of genes required for female gametophyte development and function in Arabidopsis.</title>
        <authorList>
            <person name="Pagnussat G.C."/>
            <person name="Yu H.-J."/>
            <person name="Ngo Q.A."/>
            <person name="Rajani S."/>
            <person name="Mayalagu S."/>
            <person name="Johnson C.S."/>
            <person name="Capron A."/>
            <person name="Xie L.-F."/>
            <person name="Ye D."/>
            <person name="Sundaresan V."/>
        </authorList>
    </citation>
    <scope>FUNCTION</scope>
    <scope>DISRUPTION PHENOTYPE</scope>
</reference>
<reference key="9">
    <citation type="journal article" date="2007" name="Plant Physiol.">
        <title>Oviposition by pierid butterflies triggers defense responses in Arabidopsis.</title>
        <authorList>
            <person name="Little D."/>
            <person name="Gouhier-Darimont C."/>
            <person name="Bruessow F."/>
            <person name="Reymond P."/>
        </authorList>
    </citation>
    <scope>INDUCTION BY P.BRASSICAE OVIPOSITION</scope>
</reference>
<reference key="10">
    <citation type="journal article" date="2011" name="Plant Mol. Biol.">
        <title>Probing the roles of LRR RLK genes in Arabidopsis thaliana roots using a custom T-DNA insertion set.</title>
        <authorList>
            <person name="ten Hove C.A."/>
            <person name="Bochdanovits Z."/>
            <person name="Jansweijer V.M."/>
            <person name="Koning F.G."/>
            <person name="Berke L."/>
            <person name="Sanchez-Perez G.F."/>
            <person name="Scheres B."/>
            <person name="Heidstra R."/>
        </authorList>
    </citation>
    <scope>DISRUPTION PHENOTYPE</scope>
</reference>
<organism>
    <name type="scientific">Arabidopsis thaliana</name>
    <name type="common">Mouse-ear cress</name>
    <dbReference type="NCBI Taxonomy" id="3702"/>
    <lineage>
        <taxon>Eukaryota</taxon>
        <taxon>Viridiplantae</taxon>
        <taxon>Streptophyta</taxon>
        <taxon>Embryophyta</taxon>
        <taxon>Tracheophyta</taxon>
        <taxon>Spermatophyta</taxon>
        <taxon>Magnoliopsida</taxon>
        <taxon>eudicotyledons</taxon>
        <taxon>Gunneridae</taxon>
        <taxon>Pentapetalae</taxon>
        <taxon>rosids</taxon>
        <taxon>malvids</taxon>
        <taxon>Brassicales</taxon>
        <taxon>Brassicaceae</taxon>
        <taxon>Camelineae</taxon>
        <taxon>Arabidopsis</taxon>
    </lineage>
</organism>
<protein>
    <recommendedName>
        <fullName evidence="11">Calmodulin-binding receptor kinase CaMRLK</fullName>
        <ecNumber evidence="4">2.7.11.1</ecNumber>
    </recommendedName>
    <alternativeName>
        <fullName evidence="8">Calmodulin-binding receptor-like kinase</fullName>
        <shortName evidence="8">AtCaMRLK</shortName>
    </alternativeName>
    <alternativeName>
        <fullName evidence="10">Protein MATERNAL EFFECT EMBRYO ARREST 62</fullName>
    </alternativeName>
</protein>
<name>CARLK_ARATH</name>
<sequence>MFLKLFLLLSLVSFSHSDSSSTVSCPNGTDFHQLTTVFRYVSGFNSSWFSSNCSAVITHVVLPSRKLNGTVSWNPIRNLTRLRVLDLSNNSLDGSLPTWLWSMPGLVSVNLSRNRFGGSIRVIPVNGSVLSAVKELNLSFNRFKHAVNFTGFTNLTTLDLSHNSLGVLPLGLGSLSGLRHLDISRCKINGSVKPISGLKSLDYLDLSENSMNGSFPVDFPNLNHLQFLNLSANRFSGSVGFDKYRKFGKSAFLHGGDFVFNDSKIPYHHRIHRLPHRHPPPVRQRNVKTHRTNHTPLVIGLSSSLGALIIVIFAAAIILIRRRMKSARTKSRWAISNPTPLDFKMEKSGPFEFGTESGSSWVADIKEPTAAPVVMASKPLMNLTFKDLIVATSHFGTESVISDGTCGPLYRAVLPGDLHVAIKVLERIRDVDQNDAVTAFEALTRLKHPNLLTLSGYCIAGKEKLILYEFMANGDLHRWLHELPAGETNVEDWSADTWESHVGDSSPEKTNWLIRHRIAIGVARGLAYLHHVGTTHGHLVATNILLTETLEPRISDFGINNIARTGDDTNKNNVEFDVYSFGVILFELLTGKQGSDENVKSVRRLVKERRGEEALDSRLRLAAGESVNEMVESLRIGYFCTAETPVKRPTMQQVLGLLKDIRTVSR</sequence>
<proteinExistence type="evidence at protein level"/>
<comment type="function">
    <text evidence="4 5 7">Can phosphorylate the myelin basic protein in vitro (PubMed:14720124). Required for endosperm development in embryos (PubMed:15634699). Maybe involved in auxin and osmotic stress responses (PubMed:21431781).</text>
</comment>
<comment type="catalytic activity">
    <reaction evidence="4">
        <text>L-seryl-[protein] + ATP = O-phospho-L-seryl-[protein] + ADP + H(+)</text>
        <dbReference type="Rhea" id="RHEA:17989"/>
        <dbReference type="Rhea" id="RHEA-COMP:9863"/>
        <dbReference type="Rhea" id="RHEA-COMP:11604"/>
        <dbReference type="ChEBI" id="CHEBI:15378"/>
        <dbReference type="ChEBI" id="CHEBI:29999"/>
        <dbReference type="ChEBI" id="CHEBI:30616"/>
        <dbReference type="ChEBI" id="CHEBI:83421"/>
        <dbReference type="ChEBI" id="CHEBI:456216"/>
        <dbReference type="EC" id="2.7.11.1"/>
    </reaction>
</comment>
<comment type="catalytic activity">
    <reaction evidence="4">
        <text>L-threonyl-[protein] + ATP = O-phospho-L-threonyl-[protein] + ADP + H(+)</text>
        <dbReference type="Rhea" id="RHEA:46608"/>
        <dbReference type="Rhea" id="RHEA-COMP:11060"/>
        <dbReference type="Rhea" id="RHEA-COMP:11605"/>
        <dbReference type="ChEBI" id="CHEBI:15378"/>
        <dbReference type="ChEBI" id="CHEBI:30013"/>
        <dbReference type="ChEBI" id="CHEBI:30616"/>
        <dbReference type="ChEBI" id="CHEBI:61977"/>
        <dbReference type="ChEBI" id="CHEBI:456216"/>
        <dbReference type="EC" id="2.7.11.1"/>
    </reaction>
</comment>
<comment type="cofactor">
    <cofactor evidence="4">
        <name>Mn(2+)</name>
        <dbReference type="ChEBI" id="CHEBI:29035"/>
    </cofactor>
    <cofactor evidence="4">
        <name>Mg(2+)</name>
        <dbReference type="ChEBI" id="CHEBI:18420"/>
    </cofactor>
    <text evidence="4">Uses manganese ion preferentially to magnesium ion.</text>
</comment>
<comment type="activity regulation">
    <text evidence="9">Not stimulated by calmodulin (CaM).</text>
</comment>
<comment type="subunit">
    <text evidence="4">Binds calmodulin (CaM) in a calcium-dependent manner. Interacts with CAM1, but not with CAM8.</text>
</comment>
<comment type="subcellular location">
    <subcellularLocation>
        <location evidence="11">Cell membrane</location>
        <topology evidence="1">Single-pass membrane protein</topology>
    </subcellularLocation>
</comment>
<comment type="alternative products">
    <event type="alternative splicing"/>
    <isoform>
        <id>Q9FK63-1</id>
        <name>1</name>
        <sequence type="displayed"/>
    </isoform>
    <isoform>
        <id>Q9FK63-2</id>
        <name>2</name>
        <sequence type="described" ref="VSP_058921 VSP_058922"/>
    </isoform>
</comment>
<comment type="tissue specificity">
    <text evidence="4">Expressed in reproductive and vegetative tissues, with higher levels in seedlings and flowers, but not in leaves.</text>
</comment>
<comment type="induction">
    <text evidence="6">Induced after P.brassicae oviposition.</text>
</comment>
<comment type="PTM">
    <text evidence="4">Calmodulin (CaM)-independent autophosphorylation.</text>
</comment>
<comment type="disruption phenotype">
    <text evidence="5 7">Endosperm development arrested at one-cell zygotic stage (PubMed:15634699). Increased resistance to auxin (e.g. IAA and NPA) and osmotic stress (e.g. mannitol) (PubMed:21431781).</text>
</comment>
<comment type="similarity">
    <text evidence="11">Belongs to the protein kinase superfamily. Ser/Thr protein kinase family.</text>
</comment>
<keyword id="KW-0025">Alternative splicing</keyword>
<keyword id="KW-0067">ATP-binding</keyword>
<keyword id="KW-0112">Calmodulin-binding</keyword>
<keyword id="KW-1003">Cell membrane</keyword>
<keyword id="KW-0325">Glycoprotein</keyword>
<keyword id="KW-0418">Kinase</keyword>
<keyword id="KW-0433">Leucine-rich repeat</keyword>
<keyword id="KW-0460">Magnesium</keyword>
<keyword id="KW-0464">Manganese</keyword>
<keyword id="KW-0472">Membrane</keyword>
<keyword id="KW-0547">Nucleotide-binding</keyword>
<keyword id="KW-0597">Phosphoprotein</keyword>
<keyword id="KW-0675">Receptor</keyword>
<keyword id="KW-1185">Reference proteome</keyword>
<keyword id="KW-0677">Repeat</keyword>
<keyword id="KW-0732">Signal</keyword>
<keyword id="KW-0808">Transferase</keyword>
<keyword id="KW-0812">Transmembrane</keyword>
<keyword id="KW-1133">Transmembrane helix</keyword>
<dbReference type="EC" id="2.7.11.1" evidence="4"/>
<dbReference type="EMBL" id="AY531551">
    <property type="protein sequence ID" value="AAS21681.1"/>
    <property type="molecule type" value="mRNA"/>
</dbReference>
<dbReference type="EMBL" id="FJ708790">
    <property type="protein sequence ID" value="ACN59381.1"/>
    <property type="molecule type" value="mRNA"/>
</dbReference>
<dbReference type="EMBL" id="AB012245">
    <property type="protein sequence ID" value="BAB09223.1"/>
    <property type="molecule type" value="Genomic_DNA"/>
</dbReference>
<dbReference type="EMBL" id="CP002688">
    <property type="protein sequence ID" value="AED95301.1"/>
    <property type="molecule type" value="Genomic_DNA"/>
</dbReference>
<dbReference type="EMBL" id="CP002688">
    <property type="protein sequence ID" value="ANM70401.1"/>
    <property type="molecule type" value="Genomic_DNA"/>
</dbReference>
<dbReference type="EMBL" id="AY072097">
    <property type="protein sequence ID" value="AAL59919.1"/>
    <property type="molecule type" value="mRNA"/>
</dbReference>
<dbReference type="EMBL" id="AY096584">
    <property type="protein sequence ID" value="AAM20234.1"/>
    <property type="molecule type" value="mRNA"/>
</dbReference>
<dbReference type="EMBL" id="AK220822">
    <property type="protein sequence ID" value="BAD94117.1"/>
    <property type="molecule type" value="mRNA"/>
</dbReference>
<dbReference type="RefSeq" id="NP_001332015.1">
    <molecule id="Q9FK63-2"/>
    <property type="nucleotide sequence ID" value="NM_001344640.1"/>
</dbReference>
<dbReference type="RefSeq" id="NP_199392.1">
    <molecule id="Q9FK63-1"/>
    <property type="nucleotide sequence ID" value="NM_123948.5"/>
</dbReference>
<dbReference type="SMR" id="Q9FK63"/>
<dbReference type="FunCoup" id="Q9FK63">
    <property type="interactions" value="526"/>
</dbReference>
<dbReference type="IntAct" id="Q9FK63">
    <property type="interactions" value="4"/>
</dbReference>
<dbReference type="STRING" id="3702.Q9FK63"/>
<dbReference type="GlyCosmos" id="Q9FK63">
    <property type="glycosylation" value="15 sites, No reported glycans"/>
</dbReference>
<dbReference type="GlyGen" id="Q9FK63">
    <property type="glycosylation" value="15 sites"/>
</dbReference>
<dbReference type="PaxDb" id="3702-AT5G45800.1"/>
<dbReference type="ProteomicsDB" id="240251">
    <molecule id="Q9FK63-1"/>
</dbReference>
<dbReference type="EnsemblPlants" id="AT5G45800.1">
    <molecule id="Q9FK63-1"/>
    <property type="protein sequence ID" value="AT5G45800.1"/>
    <property type="gene ID" value="AT5G45800"/>
</dbReference>
<dbReference type="EnsemblPlants" id="AT5G45800.2">
    <molecule id="Q9FK63-2"/>
    <property type="protein sequence ID" value="AT5G45800.2"/>
    <property type="gene ID" value="AT5G45800"/>
</dbReference>
<dbReference type="GeneID" id="834620"/>
<dbReference type="Gramene" id="AT5G45800.1">
    <molecule id="Q9FK63-1"/>
    <property type="protein sequence ID" value="AT5G45800.1"/>
    <property type="gene ID" value="AT5G45800"/>
</dbReference>
<dbReference type="Gramene" id="AT5G45800.2">
    <molecule id="Q9FK63-2"/>
    <property type="protein sequence ID" value="AT5G45800.2"/>
    <property type="gene ID" value="AT5G45800"/>
</dbReference>
<dbReference type="KEGG" id="ath:AT5G45800"/>
<dbReference type="Araport" id="AT5G45800"/>
<dbReference type="TAIR" id="AT5G45800">
    <property type="gene designation" value="MEE62"/>
</dbReference>
<dbReference type="eggNOG" id="ENOG502QSF1">
    <property type="taxonomic scope" value="Eukaryota"/>
</dbReference>
<dbReference type="HOGENOM" id="CLU_000288_92_6_1"/>
<dbReference type="InParanoid" id="Q9FK63"/>
<dbReference type="OMA" id="NAMQGRF"/>
<dbReference type="OrthoDB" id="1394818at2759"/>
<dbReference type="PhylomeDB" id="Q9FK63"/>
<dbReference type="PRO" id="PR:Q9FK63"/>
<dbReference type="Proteomes" id="UP000006548">
    <property type="component" value="Chromosome 5"/>
</dbReference>
<dbReference type="ExpressionAtlas" id="Q9FK63">
    <property type="expression patterns" value="baseline and differential"/>
</dbReference>
<dbReference type="GO" id="GO:0005886">
    <property type="term" value="C:plasma membrane"/>
    <property type="evidence" value="ECO:0007669"/>
    <property type="project" value="UniProtKB-SubCell"/>
</dbReference>
<dbReference type="GO" id="GO:0005524">
    <property type="term" value="F:ATP binding"/>
    <property type="evidence" value="ECO:0007669"/>
    <property type="project" value="UniProtKB-KW"/>
</dbReference>
<dbReference type="GO" id="GO:0005516">
    <property type="term" value="F:calmodulin binding"/>
    <property type="evidence" value="ECO:0000314"/>
    <property type="project" value="UniProtKB"/>
</dbReference>
<dbReference type="GO" id="GO:0004672">
    <property type="term" value="F:protein kinase activity"/>
    <property type="evidence" value="ECO:0000314"/>
    <property type="project" value="UniProtKB"/>
</dbReference>
<dbReference type="GO" id="GO:0106310">
    <property type="term" value="F:protein serine kinase activity"/>
    <property type="evidence" value="ECO:0007669"/>
    <property type="project" value="RHEA"/>
</dbReference>
<dbReference type="GO" id="GO:0004674">
    <property type="term" value="F:protein serine/threonine kinase activity"/>
    <property type="evidence" value="ECO:0007669"/>
    <property type="project" value="UniProtKB-EC"/>
</dbReference>
<dbReference type="GO" id="GO:0009793">
    <property type="term" value="P:embryo development ending in seed dormancy"/>
    <property type="evidence" value="ECO:0000315"/>
    <property type="project" value="TAIR"/>
</dbReference>
<dbReference type="GO" id="GO:0046777">
    <property type="term" value="P:protein autophosphorylation"/>
    <property type="evidence" value="ECO:0000314"/>
    <property type="project" value="UniProtKB"/>
</dbReference>
<dbReference type="GO" id="GO:0009733">
    <property type="term" value="P:response to auxin"/>
    <property type="evidence" value="ECO:0000315"/>
    <property type="project" value="UniProtKB"/>
</dbReference>
<dbReference type="GO" id="GO:0009625">
    <property type="term" value="P:response to insect"/>
    <property type="evidence" value="ECO:0000270"/>
    <property type="project" value="UniProtKB"/>
</dbReference>
<dbReference type="GO" id="GO:0006970">
    <property type="term" value="P:response to osmotic stress"/>
    <property type="evidence" value="ECO:0000315"/>
    <property type="project" value="UniProtKB"/>
</dbReference>
<dbReference type="FunFam" id="3.80.10.10:FF:001678">
    <property type="entry name" value="Calmodulin-binding receptor kinase CaMRLK"/>
    <property type="match status" value="1"/>
</dbReference>
<dbReference type="FunFam" id="3.80.10.10:FF:001906">
    <property type="entry name" value="Calmodulin-binding receptor kinase CaMRLK"/>
    <property type="match status" value="1"/>
</dbReference>
<dbReference type="FunFam" id="3.30.200.20:FF:000466">
    <property type="entry name" value="Putative LRR receptor-like serine/threonine-protein kinase"/>
    <property type="match status" value="1"/>
</dbReference>
<dbReference type="Gene3D" id="3.30.200.20">
    <property type="entry name" value="Phosphorylase Kinase, domain 1"/>
    <property type="match status" value="1"/>
</dbReference>
<dbReference type="Gene3D" id="3.80.10.10">
    <property type="entry name" value="Ribonuclease Inhibitor"/>
    <property type="match status" value="2"/>
</dbReference>
<dbReference type="Gene3D" id="1.10.510.10">
    <property type="entry name" value="Transferase(Phosphotransferase) domain 1"/>
    <property type="match status" value="2"/>
</dbReference>
<dbReference type="InterPro" id="IPR011009">
    <property type="entry name" value="Kinase-like_dom_sf"/>
</dbReference>
<dbReference type="InterPro" id="IPR001611">
    <property type="entry name" value="Leu-rich_rpt"/>
</dbReference>
<dbReference type="InterPro" id="IPR003591">
    <property type="entry name" value="Leu-rich_rpt_typical-subtyp"/>
</dbReference>
<dbReference type="InterPro" id="IPR032675">
    <property type="entry name" value="LRR_dom_sf"/>
</dbReference>
<dbReference type="InterPro" id="IPR046959">
    <property type="entry name" value="PRK1-6/SRF4-like"/>
</dbReference>
<dbReference type="InterPro" id="IPR000719">
    <property type="entry name" value="Prot_kinase_dom"/>
</dbReference>
<dbReference type="InterPro" id="IPR001245">
    <property type="entry name" value="Ser-Thr/Tyr_kinase_cat_dom"/>
</dbReference>
<dbReference type="PANTHER" id="PTHR48007:SF84">
    <property type="entry name" value="(WILD MALAYSIAN BANANA) HYPOTHETICAL PROTEIN"/>
    <property type="match status" value="1"/>
</dbReference>
<dbReference type="PANTHER" id="PTHR48007">
    <property type="entry name" value="LEUCINE-RICH REPEAT RECEPTOR-LIKE PROTEIN KINASE PXC1"/>
    <property type="match status" value="1"/>
</dbReference>
<dbReference type="Pfam" id="PF13855">
    <property type="entry name" value="LRR_8"/>
    <property type="match status" value="3"/>
</dbReference>
<dbReference type="Pfam" id="PF07714">
    <property type="entry name" value="PK_Tyr_Ser-Thr"/>
    <property type="match status" value="1"/>
</dbReference>
<dbReference type="PRINTS" id="PR00019">
    <property type="entry name" value="LEURICHRPT"/>
</dbReference>
<dbReference type="SMART" id="SM00369">
    <property type="entry name" value="LRR_TYP"/>
    <property type="match status" value="3"/>
</dbReference>
<dbReference type="SUPFAM" id="SSF52058">
    <property type="entry name" value="L domain-like"/>
    <property type="match status" value="1"/>
</dbReference>
<dbReference type="SUPFAM" id="SSF56112">
    <property type="entry name" value="Protein kinase-like (PK-like)"/>
    <property type="match status" value="1"/>
</dbReference>
<dbReference type="PROSITE" id="PS51450">
    <property type="entry name" value="LRR"/>
    <property type="match status" value="6"/>
</dbReference>
<dbReference type="PROSITE" id="PS50011">
    <property type="entry name" value="PROTEIN_KINASE_DOM"/>
    <property type="match status" value="1"/>
</dbReference>
<accession>Q9FK63</accession>
<accession>A0A1P8BFN9</accession>
<accession>Q56ZY8</accession>
<accession>Q6QNV0</accession>
<evidence type="ECO:0000255" key="1"/>
<evidence type="ECO:0000255" key="2">
    <source>
        <dbReference type="PROSITE-ProRule" id="PRU00159"/>
    </source>
</evidence>
<evidence type="ECO:0000255" key="3">
    <source>
        <dbReference type="PROSITE-ProRule" id="PRU00498"/>
    </source>
</evidence>
<evidence type="ECO:0000269" key="4">
    <source>
    </source>
</evidence>
<evidence type="ECO:0000269" key="5">
    <source>
    </source>
</evidence>
<evidence type="ECO:0000269" key="6">
    <source>
    </source>
</evidence>
<evidence type="ECO:0000269" key="7">
    <source>
    </source>
</evidence>
<evidence type="ECO:0000303" key="8">
    <source>
    </source>
</evidence>
<evidence type="ECO:0000303" key="9">
    <source>
    </source>
</evidence>
<evidence type="ECO:0000303" key="10">
    <source>
    </source>
</evidence>
<evidence type="ECO:0000305" key="11"/>
<evidence type="ECO:0000312" key="12">
    <source>
        <dbReference type="Araport" id="AT5G45800"/>
    </source>
</evidence>
<evidence type="ECO:0000312" key="13">
    <source>
        <dbReference type="EMBL" id="BAB09223.1"/>
    </source>
</evidence>
<feature type="signal peptide" evidence="1">
    <location>
        <begin position="1"/>
        <end position="17"/>
    </location>
</feature>
<feature type="chain" id="PRO_5009973812" description="Calmodulin-binding receptor kinase CaMRLK">
    <location>
        <begin position="18"/>
        <end position="666"/>
    </location>
</feature>
<feature type="topological domain" description="Extracellular" evidence="11">
    <location>
        <begin position="18"/>
        <end position="297"/>
    </location>
</feature>
<feature type="transmembrane region" description="Helical" evidence="1">
    <location>
        <begin position="298"/>
        <end position="318"/>
    </location>
</feature>
<feature type="topological domain" description="Cytoplasmic" evidence="11">
    <location>
        <begin position="319"/>
        <end position="666"/>
    </location>
</feature>
<feature type="repeat" description="LRR 1" evidence="1">
    <location>
        <begin position="79"/>
        <end position="103"/>
    </location>
</feature>
<feature type="repeat" description="LRR 2" evidence="1">
    <location>
        <begin position="105"/>
        <end position="127"/>
    </location>
</feature>
<feature type="repeat" description="LRR 3" evidence="1">
    <location>
        <begin position="130"/>
        <end position="152"/>
    </location>
</feature>
<feature type="repeat" description="LRR 4" evidence="1">
    <location>
        <begin position="153"/>
        <end position="177"/>
    </location>
</feature>
<feature type="repeat" description="LRR 5" evidence="1">
    <location>
        <begin position="178"/>
        <end position="197"/>
    </location>
</feature>
<feature type="repeat" description="LRR 6" evidence="1">
    <location>
        <begin position="198"/>
        <end position="224"/>
    </location>
</feature>
<feature type="repeat" description="LRR 7" evidence="1">
    <location>
        <begin position="226"/>
        <end position="246"/>
    </location>
</feature>
<feature type="domain" description="Protein kinase" evidence="2">
    <location>
        <begin position="395"/>
        <end position="661"/>
    </location>
</feature>
<feature type="region of interest" description="Calmodulin binding" evidence="4">
    <location>
        <begin position="319"/>
        <end position="337"/>
    </location>
</feature>
<feature type="binding site" evidence="2">
    <location>
        <begin position="401"/>
        <end position="409"/>
    </location>
    <ligand>
        <name>ATP</name>
        <dbReference type="ChEBI" id="CHEBI:30616"/>
    </ligand>
</feature>
<feature type="binding site" evidence="2">
    <location>
        <position position="423"/>
    </location>
    <ligand>
        <name>ATP</name>
        <dbReference type="ChEBI" id="CHEBI:30616"/>
    </ligand>
</feature>
<feature type="glycosylation site" description="N-linked (GlcNAc...) asparagine" evidence="3">
    <location>
        <position position="27"/>
    </location>
</feature>
<feature type="glycosylation site" description="N-linked (GlcNAc...) asparagine" evidence="3">
    <location>
        <position position="45"/>
    </location>
</feature>
<feature type="glycosylation site" description="N-linked (GlcNAc...) asparagine" evidence="3">
    <location>
        <position position="52"/>
    </location>
</feature>
<feature type="glycosylation site" description="N-linked (GlcNAc...) asparagine" evidence="3">
    <location>
        <position position="68"/>
    </location>
</feature>
<feature type="glycosylation site" description="N-linked (GlcNAc...) asparagine" evidence="3">
    <location>
        <position position="78"/>
    </location>
</feature>
<feature type="glycosylation site" description="N-linked (GlcNAc...) asparagine" evidence="3">
    <location>
        <position position="89"/>
    </location>
</feature>
<feature type="glycosylation site" description="N-linked (GlcNAc...) asparagine" evidence="3">
    <location>
        <position position="110"/>
    </location>
</feature>
<feature type="glycosylation site" description="N-linked (GlcNAc...) asparagine" evidence="3">
    <location>
        <position position="126"/>
    </location>
</feature>
<feature type="glycosylation site" description="N-linked (GlcNAc...) asparagine" evidence="3">
    <location>
        <position position="137"/>
    </location>
</feature>
<feature type="glycosylation site" description="N-linked (GlcNAc...) asparagine" evidence="3">
    <location>
        <position position="148"/>
    </location>
</feature>
<feature type="glycosylation site" description="N-linked (GlcNAc...) asparagine" evidence="3">
    <location>
        <position position="154"/>
    </location>
</feature>
<feature type="glycosylation site" description="N-linked (GlcNAc...) asparagine" evidence="3">
    <location>
        <position position="189"/>
    </location>
</feature>
<feature type="glycosylation site" description="N-linked (GlcNAc...) asparagine" evidence="3">
    <location>
        <position position="212"/>
    </location>
</feature>
<feature type="glycosylation site" description="N-linked (GlcNAc...) asparagine" evidence="3">
    <location>
        <position position="229"/>
    </location>
</feature>
<feature type="glycosylation site" description="N-linked (GlcNAc...) asparagine" evidence="3">
    <location>
        <position position="261"/>
    </location>
</feature>
<feature type="splice variant" id="VSP_058921" description="In isoform 2.">
    <original>KEKLILYEFMANGDLHRWLHELPAGETNV</original>
    <variation>LFHLVFLLVDDWDDFKICADKSHPLLWDS</variation>
    <location>
        <begin position="462"/>
        <end position="490"/>
    </location>
</feature>
<feature type="splice variant" id="VSP_058922" description="In isoform 2.">
    <location>
        <begin position="491"/>
        <end position="666"/>
    </location>
</feature>
<feature type="mutagenesis site" description="Complete loss of kinase activity." evidence="4">
    <original>K</original>
    <variation>A</variation>
    <location>
        <position position="423"/>
    </location>
</feature>
<feature type="sequence conflict" description="In Ref. 1; AAS21681." evidence="11" ref="1">
    <original>S</original>
    <variation>F</variation>
    <location>
        <position position="303"/>
    </location>
</feature>
<feature type="sequence conflict" description="In Ref. 6; BAD94117." evidence="11" ref="6">
    <original>S</original>
    <variation>R</variation>
    <location>
        <position position="580"/>
    </location>
</feature>
<gene>
    <name evidence="8" type="primary">CAMRLK</name>
    <name evidence="10" type="synonym">MEE62</name>
    <name evidence="12" type="ordered locus">At5g45800</name>
    <name evidence="13" type="ORF">MRA19.24</name>
</gene>